<name>SOX3B_XENLA</name>
<keyword id="KW-0963">Cytoplasm</keyword>
<keyword id="KW-0217">Developmental protein</keyword>
<keyword id="KW-0238">DNA-binding</keyword>
<keyword id="KW-0306">Gastrulation</keyword>
<keyword id="KW-0539">Nucleus</keyword>
<keyword id="KW-1185">Reference proteome</keyword>
<keyword id="KW-0678">Repressor</keyword>
<keyword id="KW-0804">Transcription</keyword>
<keyword id="KW-0805">Transcription regulation</keyword>
<dbReference type="EMBL" id="BC089283">
    <property type="protein sequence ID" value="AAH89283.1"/>
    <property type="molecule type" value="mRNA"/>
</dbReference>
<dbReference type="EMBL" id="X65654">
    <property type="protein sequence ID" value="CAA46605.1"/>
    <property type="molecule type" value="mRNA"/>
</dbReference>
<dbReference type="RefSeq" id="NP_001166875.1">
    <property type="nucleotide sequence ID" value="NM_001173404.1"/>
</dbReference>
<dbReference type="SMR" id="Q5FWM3"/>
<dbReference type="DNASU" id="398329"/>
<dbReference type="GeneID" id="398329"/>
<dbReference type="KEGG" id="xla:398329"/>
<dbReference type="AGR" id="Xenbase:XB-GENE-17345032"/>
<dbReference type="CTD" id="398329"/>
<dbReference type="OMA" id="GWSNGAY"/>
<dbReference type="OrthoDB" id="6247875at2759"/>
<dbReference type="Proteomes" id="UP000186698">
    <property type="component" value="Chromosome 8L"/>
</dbReference>
<dbReference type="Bgee" id="398329">
    <property type="expression patterns" value="Expressed in blastula and 11 other cell types or tissues"/>
</dbReference>
<dbReference type="GO" id="GO:0005737">
    <property type="term" value="C:cytoplasm"/>
    <property type="evidence" value="ECO:0000250"/>
    <property type="project" value="UniProtKB"/>
</dbReference>
<dbReference type="GO" id="GO:0005634">
    <property type="term" value="C:nucleus"/>
    <property type="evidence" value="ECO:0000250"/>
    <property type="project" value="UniProtKB"/>
</dbReference>
<dbReference type="GO" id="GO:0008013">
    <property type="term" value="F:beta-catenin binding"/>
    <property type="evidence" value="ECO:0000250"/>
    <property type="project" value="UniProtKB"/>
</dbReference>
<dbReference type="GO" id="GO:0001228">
    <property type="term" value="F:DNA-binding transcription activator activity, RNA polymerase II-specific"/>
    <property type="evidence" value="ECO:0000318"/>
    <property type="project" value="GO_Central"/>
</dbReference>
<dbReference type="GO" id="GO:0000978">
    <property type="term" value="F:RNA polymerase II cis-regulatory region sequence-specific DNA binding"/>
    <property type="evidence" value="ECO:0000318"/>
    <property type="project" value="GO_Central"/>
</dbReference>
<dbReference type="GO" id="GO:0043565">
    <property type="term" value="F:sequence-specific DNA binding"/>
    <property type="evidence" value="ECO:0000250"/>
    <property type="project" value="UniProtKB"/>
</dbReference>
<dbReference type="GO" id="GO:0007420">
    <property type="term" value="P:brain development"/>
    <property type="evidence" value="ECO:0000318"/>
    <property type="project" value="GO_Central"/>
</dbReference>
<dbReference type="GO" id="GO:0001704">
    <property type="term" value="P:formation of primary germ layer"/>
    <property type="evidence" value="ECO:0000250"/>
    <property type="project" value="UniProtKB"/>
</dbReference>
<dbReference type="GO" id="GO:0045892">
    <property type="term" value="P:negative regulation of DNA-templated transcription"/>
    <property type="evidence" value="ECO:0000250"/>
    <property type="project" value="UniProtKB"/>
</dbReference>
<dbReference type="GO" id="GO:0000122">
    <property type="term" value="P:negative regulation of transcription by RNA polymerase II"/>
    <property type="evidence" value="ECO:0000250"/>
    <property type="project" value="UniProtKB"/>
</dbReference>
<dbReference type="GO" id="GO:0030182">
    <property type="term" value="P:neuron differentiation"/>
    <property type="evidence" value="ECO:0000318"/>
    <property type="project" value="GO_Central"/>
</dbReference>
<dbReference type="GO" id="GO:0045944">
    <property type="term" value="P:positive regulation of transcription by RNA polymerase II"/>
    <property type="evidence" value="ECO:0000318"/>
    <property type="project" value="GO_Central"/>
</dbReference>
<dbReference type="CDD" id="cd01388">
    <property type="entry name" value="HMG-box_SoxB"/>
    <property type="match status" value="1"/>
</dbReference>
<dbReference type="FunFam" id="1.10.30.10:FF:000002">
    <property type="entry name" value="transcription factor Sox-2"/>
    <property type="match status" value="1"/>
</dbReference>
<dbReference type="Gene3D" id="1.10.30.10">
    <property type="entry name" value="High mobility group box domain"/>
    <property type="match status" value="1"/>
</dbReference>
<dbReference type="InterPro" id="IPR009071">
    <property type="entry name" value="HMG_box_dom"/>
</dbReference>
<dbReference type="InterPro" id="IPR036910">
    <property type="entry name" value="HMG_box_dom_sf"/>
</dbReference>
<dbReference type="InterPro" id="IPR022097">
    <property type="entry name" value="SOX_fam"/>
</dbReference>
<dbReference type="InterPro" id="IPR050140">
    <property type="entry name" value="SRY-related_HMG-box_TF-like"/>
</dbReference>
<dbReference type="PANTHER" id="PTHR10270">
    <property type="entry name" value="SOX TRANSCRIPTION FACTOR"/>
    <property type="match status" value="1"/>
</dbReference>
<dbReference type="PANTHER" id="PTHR10270:SF329">
    <property type="entry name" value="TRANSCRIPTION FACTOR SOX-3"/>
    <property type="match status" value="1"/>
</dbReference>
<dbReference type="Pfam" id="PF00505">
    <property type="entry name" value="HMG_box"/>
    <property type="match status" value="1"/>
</dbReference>
<dbReference type="Pfam" id="PF12336">
    <property type="entry name" value="SOXp"/>
    <property type="match status" value="1"/>
</dbReference>
<dbReference type="SMART" id="SM00398">
    <property type="entry name" value="HMG"/>
    <property type="match status" value="1"/>
</dbReference>
<dbReference type="SUPFAM" id="SSF47095">
    <property type="entry name" value="HMG-box"/>
    <property type="match status" value="1"/>
</dbReference>
<dbReference type="PROSITE" id="PS50118">
    <property type="entry name" value="HMG_BOX_2"/>
    <property type="match status" value="1"/>
</dbReference>
<protein>
    <recommendedName>
        <fullName>Transcription factor Sox-3-B</fullName>
    </recommendedName>
    <alternativeName>
        <fullName>Transcription factor Sox-11</fullName>
        <shortName>xSox-11</shortName>
    </alternativeName>
</protein>
<accession>Q5FWM3</accession>
<reference evidence="9" key="1">
    <citation type="submission" date="2005-01" db="EMBL/GenBank/DDBJ databases">
        <authorList>
            <consortium name="NIH - Xenopus Gene Collection (XGC) project"/>
        </authorList>
    </citation>
    <scope>NUCLEOTIDE SEQUENCE [LARGE SCALE MRNA]</scope>
    <source>
        <tissue evidence="9">Egg</tissue>
    </source>
</reference>
<reference evidence="7" key="2">
    <citation type="journal article" date="1992" name="Nucleic Acids Res.">
        <title>A conserved family of genes related to the testis determining gene, SRY.</title>
        <authorList>
            <person name="Denny P."/>
            <person name="Swift S."/>
            <person name="Brand N."/>
            <person name="Dabhade N."/>
            <person name="Barton P."/>
            <person name="Ashworth A."/>
        </authorList>
    </citation>
    <scope>NUCLEOTIDE SEQUENCE [MRNA] OF 51-104</scope>
    <source>
        <tissue evidence="6">Oocyte</tissue>
    </source>
</reference>
<feature type="chain" id="PRO_0000315865" description="Transcription factor Sox-3-B">
    <location>
        <begin position="1"/>
        <end position="307"/>
    </location>
</feature>
<feature type="DNA-binding region" description="HMG box" evidence="4">
    <location>
        <begin position="40"/>
        <end position="108"/>
    </location>
</feature>
<feature type="region of interest" description="Disordered" evidence="5">
    <location>
        <begin position="1"/>
        <end position="43"/>
    </location>
</feature>
<feature type="short sequence motif" description="9aaTAD" evidence="2">
    <location>
        <begin position="257"/>
        <end position="268"/>
    </location>
</feature>
<feature type="compositionally biased region" description="Gly residues" evidence="5">
    <location>
        <begin position="21"/>
        <end position="30"/>
    </location>
</feature>
<gene>
    <name type="primary">sox3-b</name>
    <name type="synonym">sox11</name>
</gene>
<sequence length="307" mass="33825">MYSMLDTDMKSPVQQSNALSGGPGTPGGKGNTSTPDQDRVKRPMNAFMVWSRGQRRKMAQENPKMHNSEISKRLGADWKLLSDSEKRPFIDEAKRLRAVHMKDYPDYKYRPRRKTKTLLKKDKYSLPGNLLAPGINPVSGGVGQRIDTYPHMNGWTNGAYSLMQEQLGYGQHPAMNSSQMQQIQHRYDMGGLQYSPMMSSAQTYMNAAASTYSMSPAYNQQSSTVMSLASMGSVVKSEPSSPPPAITSHTQRACLGDLRDMISMYLPPGGDAGDHSSLQNSRLHSVHQHYQSAGGPGVNGTVPLTHI</sequence>
<proteinExistence type="evidence at transcript level"/>
<evidence type="ECO:0000250" key="1"/>
<evidence type="ECO:0000250" key="2">
    <source>
        <dbReference type="UniProtKB" id="P41225"/>
    </source>
</evidence>
<evidence type="ECO:0000250" key="3">
    <source>
        <dbReference type="UniProtKB" id="P55863"/>
    </source>
</evidence>
<evidence type="ECO:0000255" key="4">
    <source>
        <dbReference type="PROSITE-ProRule" id="PRU00267"/>
    </source>
</evidence>
<evidence type="ECO:0000256" key="5">
    <source>
        <dbReference type="SAM" id="MobiDB-lite"/>
    </source>
</evidence>
<evidence type="ECO:0000269" key="6">
    <source>
    </source>
</evidence>
<evidence type="ECO:0000305" key="7"/>
<evidence type="ECO:0000305" key="8">
    <source>
    </source>
</evidence>
<evidence type="ECO:0000312" key="9">
    <source>
        <dbReference type="EMBL" id="AAH89283.1"/>
    </source>
</evidence>
<comment type="function">
    <text evidence="1">Transcription factor with sequence-specific DNA binding activity. Binds to the consensus sequence 5'-[AT][AT]CAA[AT]G-3', showing a preference for 5'-AACAAT-3' and 5'-AACAAAG-3'. Inhibits beta-catenin-mediated dorsal axis specification by binding to sites within the promoter of the beta-catenin-regulated gene nodal5. Acts maternally as a transcriptional repressor of nodal5 and nodal6 to restrict their expression to the vegetal hemisphere of early embryos and thus establish germ layer formation. Acts at multiple points to inhibit nodal signaling, repressing the expression of the other mesoderm-inducing nodal genes nodal, nodal2 and nodal4, and also acting downstream to induce expression of genes including trim33/ectodermin, ema and coco, whose products repress nodal signaling (By similarity).</text>
</comment>
<comment type="subunit">
    <text evidence="3">Interacts with ctnnb1.</text>
</comment>
<comment type="subcellular location">
    <subcellularLocation>
        <location evidence="3 4">Nucleus</location>
    </subcellularLocation>
    <subcellularLocation>
        <location evidence="3">Cytoplasm</location>
    </subcellularLocation>
    <text evidence="3">Primarily cytoplasmic in early embryos. Nuclear localization becomes more pronounced as development proceeds (By similarity).</text>
</comment>
<comment type="domain">
    <text evidence="2">The 9aaTAD motif is a transactivation domain present in a large number of yeast and animal transcription factors.</text>
</comment>
<comment type="caution">
    <text evidence="8">Was originally termed sox-11.</text>
</comment>
<organism>
    <name type="scientific">Xenopus laevis</name>
    <name type="common">African clawed frog</name>
    <dbReference type="NCBI Taxonomy" id="8355"/>
    <lineage>
        <taxon>Eukaryota</taxon>
        <taxon>Metazoa</taxon>
        <taxon>Chordata</taxon>
        <taxon>Craniata</taxon>
        <taxon>Vertebrata</taxon>
        <taxon>Euteleostomi</taxon>
        <taxon>Amphibia</taxon>
        <taxon>Batrachia</taxon>
        <taxon>Anura</taxon>
        <taxon>Pipoidea</taxon>
        <taxon>Pipidae</taxon>
        <taxon>Xenopodinae</taxon>
        <taxon>Xenopus</taxon>
        <taxon>Xenopus</taxon>
    </lineage>
</organism>